<feature type="chain" id="PRO_0000341115" description="D-alanine--D-alanine ligase">
    <location>
        <begin position="1"/>
        <end position="360"/>
    </location>
</feature>
<feature type="domain" description="ATP-grasp" evidence="2">
    <location>
        <begin position="134"/>
        <end position="343"/>
    </location>
</feature>
<feature type="binding site" evidence="2">
    <location>
        <begin position="169"/>
        <end position="224"/>
    </location>
    <ligand>
        <name>ATP</name>
        <dbReference type="ChEBI" id="CHEBI:30616"/>
    </ligand>
</feature>
<feature type="binding site" evidence="2">
    <location>
        <position position="297"/>
    </location>
    <ligand>
        <name>Mg(2+)</name>
        <dbReference type="ChEBI" id="CHEBI:18420"/>
        <label>1</label>
    </ligand>
</feature>
<feature type="binding site" evidence="2">
    <location>
        <position position="310"/>
    </location>
    <ligand>
        <name>Mg(2+)</name>
        <dbReference type="ChEBI" id="CHEBI:18420"/>
        <label>1</label>
    </ligand>
</feature>
<feature type="binding site" evidence="2">
    <location>
        <position position="310"/>
    </location>
    <ligand>
        <name>Mg(2+)</name>
        <dbReference type="ChEBI" id="CHEBI:18420"/>
        <label>2</label>
    </ligand>
</feature>
<feature type="binding site" evidence="2">
    <location>
        <position position="312"/>
    </location>
    <ligand>
        <name>Mg(2+)</name>
        <dbReference type="ChEBI" id="CHEBI:18420"/>
        <label>2</label>
    </ligand>
</feature>
<keyword id="KW-0067">ATP-binding</keyword>
<keyword id="KW-0133">Cell shape</keyword>
<keyword id="KW-0961">Cell wall biogenesis/degradation</keyword>
<keyword id="KW-0963">Cytoplasm</keyword>
<keyword id="KW-0436">Ligase</keyword>
<keyword id="KW-0460">Magnesium</keyword>
<keyword id="KW-0464">Manganese</keyword>
<keyword id="KW-0479">Metal-binding</keyword>
<keyword id="KW-0547">Nucleotide-binding</keyword>
<keyword id="KW-0573">Peptidoglycan synthesis</keyword>
<keyword id="KW-1185">Reference proteome</keyword>
<protein>
    <recommendedName>
        <fullName evidence="2">D-alanine--D-alanine ligase</fullName>
        <ecNumber evidence="2">6.3.2.4</ecNumber>
    </recommendedName>
    <alternativeName>
        <fullName evidence="2">D-Ala-D-Ala ligase</fullName>
    </alternativeName>
    <alternativeName>
        <fullName evidence="2">D-alanylalanine synthetase</fullName>
    </alternativeName>
</protein>
<gene>
    <name evidence="2" type="primary">ddl</name>
    <name type="ordered locus">LBA0137</name>
</gene>
<evidence type="ECO:0000250" key="1"/>
<evidence type="ECO:0000255" key="2">
    <source>
        <dbReference type="HAMAP-Rule" id="MF_00047"/>
    </source>
</evidence>
<proteinExistence type="inferred from homology"/>
<name>DDL_LACAC</name>
<dbReference type="EC" id="6.3.2.4" evidence="2"/>
<dbReference type="EMBL" id="CP000033">
    <property type="protein sequence ID" value="AAV42038.1"/>
    <property type="molecule type" value="Genomic_DNA"/>
</dbReference>
<dbReference type="RefSeq" id="WP_003548727.1">
    <property type="nucleotide sequence ID" value="NC_006814.3"/>
</dbReference>
<dbReference type="RefSeq" id="YP_193069.1">
    <property type="nucleotide sequence ID" value="NC_006814.3"/>
</dbReference>
<dbReference type="SMR" id="Q5FMN6"/>
<dbReference type="STRING" id="272621.LBA0137"/>
<dbReference type="KEGG" id="lac:LBA0137"/>
<dbReference type="PATRIC" id="fig|272621.13.peg.133"/>
<dbReference type="eggNOG" id="COG1181">
    <property type="taxonomic scope" value="Bacteria"/>
</dbReference>
<dbReference type="HOGENOM" id="CLU_039268_0_0_9"/>
<dbReference type="OrthoDB" id="9813261at2"/>
<dbReference type="BioCyc" id="LACI272621:G1G49-135-MONOMER"/>
<dbReference type="UniPathway" id="UPA00219"/>
<dbReference type="Proteomes" id="UP000006381">
    <property type="component" value="Chromosome"/>
</dbReference>
<dbReference type="GO" id="GO:0005829">
    <property type="term" value="C:cytosol"/>
    <property type="evidence" value="ECO:0007669"/>
    <property type="project" value="TreeGrafter"/>
</dbReference>
<dbReference type="GO" id="GO:0005524">
    <property type="term" value="F:ATP binding"/>
    <property type="evidence" value="ECO:0007669"/>
    <property type="project" value="UniProtKB-KW"/>
</dbReference>
<dbReference type="GO" id="GO:0008716">
    <property type="term" value="F:D-alanine-D-alanine ligase activity"/>
    <property type="evidence" value="ECO:0007669"/>
    <property type="project" value="UniProtKB-UniRule"/>
</dbReference>
<dbReference type="GO" id="GO:0046872">
    <property type="term" value="F:metal ion binding"/>
    <property type="evidence" value="ECO:0007669"/>
    <property type="project" value="UniProtKB-KW"/>
</dbReference>
<dbReference type="GO" id="GO:0071555">
    <property type="term" value="P:cell wall organization"/>
    <property type="evidence" value="ECO:0007669"/>
    <property type="project" value="UniProtKB-KW"/>
</dbReference>
<dbReference type="GO" id="GO:0009252">
    <property type="term" value="P:peptidoglycan biosynthetic process"/>
    <property type="evidence" value="ECO:0007669"/>
    <property type="project" value="UniProtKB-UniRule"/>
</dbReference>
<dbReference type="GO" id="GO:0008360">
    <property type="term" value="P:regulation of cell shape"/>
    <property type="evidence" value="ECO:0007669"/>
    <property type="project" value="UniProtKB-KW"/>
</dbReference>
<dbReference type="FunFam" id="3.30.1490.20:FF:000007">
    <property type="entry name" value="D-alanine--D-alanine ligase"/>
    <property type="match status" value="1"/>
</dbReference>
<dbReference type="FunFam" id="3.30.470.20:FF:000008">
    <property type="entry name" value="D-alanine--D-alanine ligase"/>
    <property type="match status" value="1"/>
</dbReference>
<dbReference type="Gene3D" id="3.40.50.20">
    <property type="match status" value="1"/>
</dbReference>
<dbReference type="Gene3D" id="3.30.1490.20">
    <property type="entry name" value="ATP-grasp fold, A domain"/>
    <property type="match status" value="1"/>
</dbReference>
<dbReference type="Gene3D" id="3.30.470.20">
    <property type="entry name" value="ATP-grasp fold, B domain"/>
    <property type="match status" value="1"/>
</dbReference>
<dbReference type="HAMAP" id="MF_00047">
    <property type="entry name" value="Dala_Dala_lig"/>
    <property type="match status" value="1"/>
</dbReference>
<dbReference type="InterPro" id="IPR011761">
    <property type="entry name" value="ATP-grasp"/>
</dbReference>
<dbReference type="InterPro" id="IPR013815">
    <property type="entry name" value="ATP_grasp_subdomain_1"/>
</dbReference>
<dbReference type="InterPro" id="IPR000291">
    <property type="entry name" value="D-Ala_lig_Van_CS"/>
</dbReference>
<dbReference type="InterPro" id="IPR005905">
    <property type="entry name" value="D_ala_D_ala"/>
</dbReference>
<dbReference type="InterPro" id="IPR011095">
    <property type="entry name" value="Dala_Dala_lig_C"/>
</dbReference>
<dbReference type="InterPro" id="IPR011127">
    <property type="entry name" value="Dala_Dala_lig_N"/>
</dbReference>
<dbReference type="InterPro" id="IPR016185">
    <property type="entry name" value="PreATP-grasp_dom_sf"/>
</dbReference>
<dbReference type="NCBIfam" id="TIGR01205">
    <property type="entry name" value="D_ala_D_alaTIGR"/>
    <property type="match status" value="1"/>
</dbReference>
<dbReference type="NCBIfam" id="NF002528">
    <property type="entry name" value="PRK01966.1-4"/>
    <property type="match status" value="1"/>
</dbReference>
<dbReference type="PANTHER" id="PTHR23132">
    <property type="entry name" value="D-ALANINE--D-ALANINE LIGASE"/>
    <property type="match status" value="1"/>
</dbReference>
<dbReference type="PANTHER" id="PTHR23132:SF25">
    <property type="entry name" value="D-ALANINE--D-ALANINE LIGASE A"/>
    <property type="match status" value="1"/>
</dbReference>
<dbReference type="Pfam" id="PF07478">
    <property type="entry name" value="Dala_Dala_lig_C"/>
    <property type="match status" value="1"/>
</dbReference>
<dbReference type="Pfam" id="PF01820">
    <property type="entry name" value="Dala_Dala_lig_N"/>
    <property type="match status" value="1"/>
</dbReference>
<dbReference type="PIRSF" id="PIRSF039102">
    <property type="entry name" value="Ddl/VanB"/>
    <property type="match status" value="1"/>
</dbReference>
<dbReference type="SUPFAM" id="SSF56059">
    <property type="entry name" value="Glutathione synthetase ATP-binding domain-like"/>
    <property type="match status" value="1"/>
</dbReference>
<dbReference type="SUPFAM" id="SSF52440">
    <property type="entry name" value="PreATP-grasp domain"/>
    <property type="match status" value="1"/>
</dbReference>
<dbReference type="PROSITE" id="PS50975">
    <property type="entry name" value="ATP_GRASP"/>
    <property type="match status" value="1"/>
</dbReference>
<dbReference type="PROSITE" id="PS00843">
    <property type="entry name" value="DALA_DALA_LIGASE_1"/>
    <property type="match status" value="1"/>
</dbReference>
<reference key="1">
    <citation type="journal article" date="2005" name="Proc. Natl. Acad. Sci. U.S.A.">
        <title>Complete genome sequence of the probiotic lactic acid bacterium Lactobacillus acidophilus NCFM.</title>
        <authorList>
            <person name="Altermann E."/>
            <person name="Russell W.M."/>
            <person name="Azcarate-Peril M.A."/>
            <person name="Barrangou R."/>
            <person name="Buck B.L."/>
            <person name="McAuliffe O."/>
            <person name="Souther N."/>
            <person name="Dobson A."/>
            <person name="Duong T."/>
            <person name="Callanan M."/>
            <person name="Lick S."/>
            <person name="Hamrick A."/>
            <person name="Cano R."/>
            <person name="Klaenhammer T.R."/>
        </authorList>
    </citation>
    <scope>NUCLEOTIDE SEQUENCE [LARGE SCALE GENOMIC DNA]</scope>
    <source>
        <strain>ATCC 700396 / NCK56 / N2 / NCFM</strain>
    </source>
</reference>
<comment type="function">
    <text evidence="2">Cell wall formation.</text>
</comment>
<comment type="catalytic activity">
    <reaction evidence="2">
        <text>2 D-alanine + ATP = D-alanyl-D-alanine + ADP + phosphate + H(+)</text>
        <dbReference type="Rhea" id="RHEA:11224"/>
        <dbReference type="ChEBI" id="CHEBI:15378"/>
        <dbReference type="ChEBI" id="CHEBI:30616"/>
        <dbReference type="ChEBI" id="CHEBI:43474"/>
        <dbReference type="ChEBI" id="CHEBI:57416"/>
        <dbReference type="ChEBI" id="CHEBI:57822"/>
        <dbReference type="ChEBI" id="CHEBI:456216"/>
        <dbReference type="EC" id="6.3.2.4"/>
    </reaction>
</comment>
<comment type="cofactor">
    <cofactor evidence="1">
        <name>Mg(2+)</name>
        <dbReference type="ChEBI" id="CHEBI:18420"/>
    </cofactor>
    <cofactor evidence="1">
        <name>Mn(2+)</name>
        <dbReference type="ChEBI" id="CHEBI:29035"/>
    </cofactor>
    <text evidence="1">Binds 2 magnesium or manganese ions per subunit.</text>
</comment>
<comment type="pathway">
    <text evidence="2">Cell wall biogenesis; peptidoglycan biosynthesis.</text>
</comment>
<comment type="subcellular location">
    <subcellularLocation>
        <location evidence="2">Cytoplasm</location>
    </subcellularLocation>
</comment>
<comment type="similarity">
    <text evidence="2">Belongs to the D-alanine--D-alanine ligase family.</text>
</comment>
<organism>
    <name type="scientific">Lactobacillus acidophilus (strain ATCC 700396 / NCK56 / N2 / NCFM)</name>
    <dbReference type="NCBI Taxonomy" id="272621"/>
    <lineage>
        <taxon>Bacteria</taxon>
        <taxon>Bacillati</taxon>
        <taxon>Bacillota</taxon>
        <taxon>Bacilli</taxon>
        <taxon>Lactobacillales</taxon>
        <taxon>Lactobacillaceae</taxon>
        <taxon>Lactobacillus</taxon>
    </lineage>
</organism>
<accession>Q5FMN6</accession>
<sequence length="360" mass="40246">MTKKIQVGLIFGGNSSEYEVSIVSGHNIYKAIDKDKFDVHPIWITNEGYFASEEESFKVLEDPSYQVENPHKVNNISNIIELKNLPEIDVFFPIVHGNLGEDGVLQGLFRLMNKPFVGDDVLAAAATMDKEFTKILAQRVGVPVADWISIKRFEYDDKNNDKLNYEKVAEKLGHDMFVKPSNQGSSVGVNHVTNAEEYAAALEEAFKYDDKVLVEETVPGTEVETAVLGNDKPIVAGVGQITNAKGSFYTYENKYDDNSTSKLQIPADLPQDIVDTVRENARKVYEITECSGMARIDSMLTPDGKVVLTEVNALPGFTNISMYPKLFEEAGIPYTELITRLIQAGMDRFDHKKTLLHKHD</sequence>